<dbReference type="EMBL" id="U20646">
    <property type="protein sequence ID" value="AAB09631.1"/>
    <property type="status" value="ALT_INIT"/>
    <property type="molecule type" value="Genomic_DNA"/>
</dbReference>
<dbReference type="EMBL" id="CP000100">
    <property type="protein sequence ID" value="ABB57119.1"/>
    <property type="status" value="ALT_INIT"/>
    <property type="molecule type" value="Genomic_DNA"/>
</dbReference>
<dbReference type="SMR" id="P53533"/>
<dbReference type="STRING" id="1140.Synpcc7942_1089"/>
<dbReference type="PaxDb" id="1140-Synpcc7942_1089"/>
<dbReference type="KEGG" id="syf:Synpcc7942_1089"/>
<dbReference type="eggNOG" id="COG0542">
    <property type="taxonomic scope" value="Bacteria"/>
</dbReference>
<dbReference type="HOGENOM" id="CLU_005070_4_1_3"/>
<dbReference type="OrthoDB" id="9803641at2"/>
<dbReference type="BioCyc" id="SYNEL:SYNPCC7942_1089-MONOMER"/>
<dbReference type="Proteomes" id="UP000889800">
    <property type="component" value="Chromosome"/>
</dbReference>
<dbReference type="GO" id="GO:0005737">
    <property type="term" value="C:cytoplasm"/>
    <property type="evidence" value="ECO:0007669"/>
    <property type="project" value="UniProtKB-SubCell"/>
</dbReference>
<dbReference type="GO" id="GO:0005524">
    <property type="term" value="F:ATP binding"/>
    <property type="evidence" value="ECO:0007669"/>
    <property type="project" value="UniProtKB-KW"/>
</dbReference>
<dbReference type="GO" id="GO:0016887">
    <property type="term" value="F:ATP hydrolysis activity"/>
    <property type="evidence" value="ECO:0007669"/>
    <property type="project" value="InterPro"/>
</dbReference>
<dbReference type="GO" id="GO:0034605">
    <property type="term" value="P:cellular response to heat"/>
    <property type="evidence" value="ECO:0007669"/>
    <property type="project" value="TreeGrafter"/>
</dbReference>
<dbReference type="GO" id="GO:0042026">
    <property type="term" value="P:protein refolding"/>
    <property type="evidence" value="ECO:0007669"/>
    <property type="project" value="InterPro"/>
</dbReference>
<dbReference type="CDD" id="cd00009">
    <property type="entry name" value="AAA"/>
    <property type="match status" value="1"/>
</dbReference>
<dbReference type="CDD" id="cd19499">
    <property type="entry name" value="RecA-like_ClpB_Hsp104-like"/>
    <property type="match status" value="1"/>
</dbReference>
<dbReference type="FunFam" id="1.10.8.60:FF:000017">
    <property type="entry name" value="ATP-dependent chaperone ClpB"/>
    <property type="match status" value="1"/>
</dbReference>
<dbReference type="FunFam" id="3.40.50.300:FF:000120">
    <property type="entry name" value="ATP-dependent chaperone ClpB"/>
    <property type="match status" value="1"/>
</dbReference>
<dbReference type="FunFam" id="3.40.50.300:FF:000025">
    <property type="entry name" value="ATP-dependent Clp protease subunit"/>
    <property type="match status" value="1"/>
</dbReference>
<dbReference type="FunFam" id="3.40.50.300:FF:000010">
    <property type="entry name" value="Chaperone clpB 1, putative"/>
    <property type="match status" value="1"/>
</dbReference>
<dbReference type="Gene3D" id="1.10.8.60">
    <property type="match status" value="1"/>
</dbReference>
<dbReference type="Gene3D" id="1.10.1780.10">
    <property type="entry name" value="Clp, N-terminal domain"/>
    <property type="match status" value="1"/>
</dbReference>
<dbReference type="Gene3D" id="3.40.50.300">
    <property type="entry name" value="P-loop containing nucleotide triphosphate hydrolases"/>
    <property type="match status" value="3"/>
</dbReference>
<dbReference type="InterPro" id="IPR003593">
    <property type="entry name" value="AAA+_ATPase"/>
</dbReference>
<dbReference type="InterPro" id="IPR003959">
    <property type="entry name" value="ATPase_AAA_core"/>
</dbReference>
<dbReference type="InterPro" id="IPR017730">
    <property type="entry name" value="Chaperonin_ClpB"/>
</dbReference>
<dbReference type="InterPro" id="IPR019489">
    <property type="entry name" value="Clp_ATPase_C"/>
</dbReference>
<dbReference type="InterPro" id="IPR036628">
    <property type="entry name" value="Clp_N_dom_sf"/>
</dbReference>
<dbReference type="InterPro" id="IPR004176">
    <property type="entry name" value="Clp_R_dom"/>
</dbReference>
<dbReference type="InterPro" id="IPR001270">
    <property type="entry name" value="ClpA/B"/>
</dbReference>
<dbReference type="InterPro" id="IPR018368">
    <property type="entry name" value="ClpA/B_CS1"/>
</dbReference>
<dbReference type="InterPro" id="IPR028299">
    <property type="entry name" value="ClpA/B_CS2"/>
</dbReference>
<dbReference type="InterPro" id="IPR041546">
    <property type="entry name" value="ClpA/ClpB_AAA_lid"/>
</dbReference>
<dbReference type="InterPro" id="IPR050130">
    <property type="entry name" value="ClpA_ClpB"/>
</dbReference>
<dbReference type="InterPro" id="IPR027417">
    <property type="entry name" value="P-loop_NTPase"/>
</dbReference>
<dbReference type="NCBIfam" id="TIGR03346">
    <property type="entry name" value="chaperone_ClpB"/>
    <property type="match status" value="1"/>
</dbReference>
<dbReference type="PANTHER" id="PTHR11638">
    <property type="entry name" value="ATP-DEPENDENT CLP PROTEASE"/>
    <property type="match status" value="1"/>
</dbReference>
<dbReference type="PANTHER" id="PTHR11638:SF18">
    <property type="entry name" value="HEAT SHOCK PROTEIN 104"/>
    <property type="match status" value="1"/>
</dbReference>
<dbReference type="Pfam" id="PF00004">
    <property type="entry name" value="AAA"/>
    <property type="match status" value="1"/>
</dbReference>
<dbReference type="Pfam" id="PF07724">
    <property type="entry name" value="AAA_2"/>
    <property type="match status" value="1"/>
</dbReference>
<dbReference type="Pfam" id="PF17871">
    <property type="entry name" value="AAA_lid_9"/>
    <property type="match status" value="1"/>
</dbReference>
<dbReference type="Pfam" id="PF02861">
    <property type="entry name" value="Clp_N"/>
    <property type="match status" value="2"/>
</dbReference>
<dbReference type="Pfam" id="PF10431">
    <property type="entry name" value="ClpB_D2-small"/>
    <property type="match status" value="1"/>
</dbReference>
<dbReference type="PRINTS" id="PR00300">
    <property type="entry name" value="CLPPROTEASEA"/>
</dbReference>
<dbReference type="SMART" id="SM00382">
    <property type="entry name" value="AAA"/>
    <property type="match status" value="2"/>
</dbReference>
<dbReference type="SMART" id="SM01086">
    <property type="entry name" value="ClpB_D2-small"/>
    <property type="match status" value="1"/>
</dbReference>
<dbReference type="SUPFAM" id="SSF81923">
    <property type="entry name" value="Double Clp-N motif"/>
    <property type="match status" value="1"/>
</dbReference>
<dbReference type="SUPFAM" id="SSF52540">
    <property type="entry name" value="P-loop containing nucleoside triphosphate hydrolases"/>
    <property type="match status" value="2"/>
</dbReference>
<dbReference type="PROSITE" id="PS51903">
    <property type="entry name" value="CLP_R"/>
    <property type="match status" value="1"/>
</dbReference>
<dbReference type="PROSITE" id="PS00870">
    <property type="entry name" value="CLPAB_1"/>
    <property type="match status" value="1"/>
</dbReference>
<dbReference type="PROSITE" id="PS00871">
    <property type="entry name" value="CLPAB_2"/>
    <property type="match status" value="1"/>
</dbReference>
<proteinExistence type="evidence at transcript level"/>
<feature type="chain" id="PRO_0000005497" description="Chaperone protein ClpB 1">
    <location>
        <begin position="1"/>
        <end position="874"/>
    </location>
</feature>
<feature type="domain" description="Clp R" evidence="2">
    <location>
        <begin position="6"/>
        <end position="148"/>
    </location>
</feature>
<feature type="region of interest" description="Repeat 1" evidence="2">
    <location>
        <begin position="9"/>
        <end position="73"/>
    </location>
</feature>
<feature type="region of interest" description="Repeat 2" evidence="2">
    <location>
        <begin position="85"/>
        <end position="148"/>
    </location>
</feature>
<feature type="region of interest" description="NBD1" evidence="1">
    <location>
        <begin position="161"/>
        <end position="342"/>
    </location>
</feature>
<feature type="region of interest" description="Linker" evidence="1">
    <location>
        <begin position="343"/>
        <end position="551"/>
    </location>
</feature>
<feature type="region of interest" description="NBD2" evidence="1">
    <location>
        <begin position="561"/>
        <end position="772"/>
    </location>
</feature>
<feature type="region of interest" description="C-terminal" evidence="1">
    <location>
        <begin position="773"/>
        <end position="874"/>
    </location>
</feature>
<feature type="coiled-coil region" evidence="1">
    <location>
        <begin position="393"/>
        <end position="527"/>
    </location>
</feature>
<feature type="binding site" evidence="1">
    <location>
        <begin position="208"/>
        <end position="215"/>
    </location>
    <ligand>
        <name>ATP</name>
        <dbReference type="ChEBI" id="CHEBI:30616"/>
        <label>1</label>
    </ligand>
</feature>
<feature type="binding site" evidence="1">
    <location>
        <begin position="611"/>
        <end position="618"/>
    </location>
    <ligand>
        <name>ATP</name>
        <dbReference type="ChEBI" id="CHEBI:30616"/>
        <label>2</label>
    </ligand>
</feature>
<feature type="splice variant" id="VSP_018706" description="In isoform ClpB'." evidence="4">
    <location>
        <begin position="1"/>
        <end position="150"/>
    </location>
</feature>
<feature type="splice variant" id="VSP_018707" description="In isoform ClpB'." evidence="4">
    <original>V</original>
    <variation>M</variation>
    <location>
        <position position="151"/>
    </location>
</feature>
<feature type="sequence conflict" description="In Ref. 1; AAB09631." evidence="4" ref="1">
    <original>K</original>
    <variation>T</variation>
    <location>
        <position position="262"/>
    </location>
</feature>
<feature type="sequence conflict" description="In Ref. 1; AAB09631." evidence="4" ref="1">
    <original>I</original>
    <variation>M</variation>
    <location>
        <position position="282"/>
    </location>
</feature>
<feature type="sequence conflict" description="In Ref. 1; AAB09631." evidence="4" ref="1">
    <original>P</original>
    <variation>T</variation>
    <location>
        <position position="303"/>
    </location>
</feature>
<feature type="sequence conflict" description="In Ref. 1; AAB09631." evidence="4" ref="1">
    <original>DE</original>
    <variation>GK</variation>
    <location>
        <begin position="319"/>
        <end position="320"/>
    </location>
</feature>
<organism>
    <name type="scientific">Synechococcus elongatus (strain ATCC 33912 / PCC 7942 / FACHB-805)</name>
    <name type="common">Anacystis nidulans R2</name>
    <dbReference type="NCBI Taxonomy" id="1140"/>
    <lineage>
        <taxon>Bacteria</taxon>
        <taxon>Bacillati</taxon>
        <taxon>Cyanobacteriota</taxon>
        <taxon>Cyanophyceae</taxon>
        <taxon>Synechococcales</taxon>
        <taxon>Synechococcaceae</taxon>
        <taxon>Synechococcus</taxon>
    </lineage>
</organism>
<accession>P53533</accession>
<accession>Q31PA0</accession>
<protein>
    <recommendedName>
        <fullName>Chaperone protein ClpB 1</fullName>
    </recommendedName>
</protein>
<keyword id="KW-0024">Alternative initiation</keyword>
<keyword id="KW-0067">ATP-binding</keyword>
<keyword id="KW-0143">Chaperone</keyword>
<keyword id="KW-0175">Coiled coil</keyword>
<keyword id="KW-0963">Cytoplasm</keyword>
<keyword id="KW-0547">Nucleotide-binding</keyword>
<keyword id="KW-1185">Reference proteome</keyword>
<keyword id="KW-0677">Repeat</keyword>
<keyword id="KW-0346">Stress response</keyword>
<reference key="1">
    <citation type="journal article" date="1996" name="J. Bacteriol.">
        <title>The heat shock protein ClpB mediates the development of thermotolerance in the cyanobacterium Synechococcus sp. strain PCC 7942.</title>
        <authorList>
            <person name="Eriksson M.J."/>
            <person name="Clarke A.K."/>
        </authorList>
    </citation>
    <scope>NUCLEOTIDE SEQUENCE [GENOMIC DNA]</scope>
</reference>
<reference key="2">
    <citation type="submission" date="2005-08" db="EMBL/GenBank/DDBJ databases">
        <title>Complete sequence of chromosome 1 of Synechococcus elongatus PCC 7942.</title>
        <authorList>
            <consortium name="US DOE Joint Genome Institute"/>
            <person name="Copeland A."/>
            <person name="Lucas S."/>
            <person name="Lapidus A."/>
            <person name="Barry K."/>
            <person name="Detter J.C."/>
            <person name="Glavina T."/>
            <person name="Hammon N."/>
            <person name="Israni S."/>
            <person name="Pitluck S."/>
            <person name="Schmutz J."/>
            <person name="Larimer F."/>
            <person name="Land M."/>
            <person name="Kyrpides N."/>
            <person name="Lykidis A."/>
            <person name="Golden S."/>
            <person name="Richardson P."/>
        </authorList>
    </citation>
    <scope>NUCLEOTIDE SEQUENCE [LARGE SCALE GENOMIC DNA]</scope>
    <source>
        <strain>ATCC 33912 / PCC 7942 / FACHB-805</strain>
    </source>
</reference>
<reference key="3">
    <citation type="journal article" date="1997" name="J. Bacteriol.">
        <title>Induction of the heat shock protein ClpB affects cold acclimation in the cyanobacterium Synechococcus sp. strain PCC 7942.</title>
        <authorList>
            <person name="Porankiewicz J."/>
            <person name="Clarke A.K."/>
        </authorList>
    </citation>
    <scope>ALTERNATIVE INITIATION</scope>
    <scope>ROLE IN THERMOTOLERANCE</scope>
</reference>
<reference key="4">
    <citation type="journal article" date="2000" name="J. Bacteriol.">
        <title>The truncated form of the bacterial heat shock protein ClpB/HSP100 contributes to development of thermotolerance in the cyanobacterium Synechococcus sp. strain PCC 7942.</title>
        <authorList>
            <person name="Clarke A.K."/>
            <person name="Eriksson M.J."/>
        </authorList>
    </citation>
    <scope>ROLE OF ISOFORM CLP' IN THERMOTOLERANCE</scope>
</reference>
<comment type="function">
    <text evidence="1 3">Part of a stress-induced multi-chaperone system, it is involved in the recovery of the cell from heat-induced damage, in cooperation with DnaK, DnaJ and GrpE. Acts before DnaK, in the processing of protein aggregates. Protein binding stimulates the ATPase activity; ATP hydrolysis unfolds the denatured protein aggregates, which probably helps expose new hydrophobic binding sites on the surface of ClpB-bound aggregates, contributing to the solubilization and refolding of denatured protein aggregates by DnaK (By similarity). Necessary for thermotolerance.</text>
</comment>
<comment type="subunit">
    <text evidence="1">Homohexamer. The oligomerization is ATP-dependent (By similarity).</text>
</comment>
<comment type="subcellular location">
    <subcellularLocation>
        <location evidence="4">Cytoplasm</location>
    </subcellularLocation>
</comment>
<comment type="alternative products">
    <event type="alternative initiation"/>
    <isoform>
        <id>P53533-1</id>
        <name>ClpB</name>
        <sequence type="displayed"/>
    </isoform>
    <isoform>
        <id>P53533-2</id>
        <name>ClpB'</name>
        <sequence type="described" ref="VSP_018706 VSP_018707"/>
    </isoform>
</comment>
<comment type="induction">
    <text>By heat shock.</text>
</comment>
<comment type="domain">
    <text evidence="1">The Clp repeat (R) domain probably functions as a substrate-discriminating domain, recruiting aggregated proteins to the ClpB hexamer and/or stabilizing bound proteins. The NBD2 domain is responsible for oligomerization, whereas the NBD1 domain stabilizes the hexamer probably in an ATP-dependent manner. The movement of the coiled-coil domain is essential for ClpB ability to rescue proteins from an aggregated state, probably by pulling apart large aggregated proteins, which are bound between the coiled-coils motifs of adjacent ClpB subunits in the functional hexamer (By similarity).</text>
</comment>
<comment type="miscellaneous">
    <molecule>Isoform ClpB'</molecule>
    <text evidence="4">Also contributes to the overall thermotolerance of the bacterium.</text>
</comment>
<comment type="similarity">
    <text evidence="4">Belongs to the ClpA/ClpB family.</text>
</comment>
<comment type="sequence caution" evidence="4">
    <conflict type="erroneous initiation">
        <sequence resource="EMBL-CDS" id="AAB09631"/>
    </conflict>
</comment>
<comment type="sequence caution" evidence="4">
    <conflict type="erroneous initiation">
        <sequence resource="EMBL-CDS" id="ABB57119"/>
    </conflict>
</comment>
<sequence>MQPTNPNQFTEKAWEAIVRTTDVAKQAQHQQIESEHLFLALLQEPGLALNILKKAGLEAAQLQQFTERFIARQPKVSGGNQSVYLGRSLDQLLDQADQFRKDFGDEFISVEHLILSFPRDSRFGRLLSQEFKVDEKQLRQIIQQIRGSQKVTDQNPEGKYEALEKYGRDLTEMARRGKLDPVIGRDDEIRRTIQILSRRTKNNPVLIGEPGVGKTAIAEGLAQRIINGDVPQSLKDRRLIALDMGALIAGAKFRGEFEERLKAVLKEVTDSEGIIILFIDEIHTVVGAGAVQGSMDAGNLLKPMLARGELRCIGATTLDEYRQYIEKDAALERRFQQVFVDQPTVEDTISILRGLKERYEVHHGVRISDNALVAAAVLSTRYISDRFLPDKAIDLVDESAARLKMEITSKPEELDEIDRKILQLEMERLSLQKESDLASQERLQRLEKELADLKEEQRSLSSQWQAEKDVITDIQSVKEEIDQVNLLIQQAERDYDLNKAAELKYGKLTELQRKLNEMEGGLATTHTSGKSLLREEVTEVDIAEIISKWTGIPVSKLVESEMQKLLNLDEELHQRVIGQEEAVSAVADAIQRSRAGLSDPKRPIASFIFLGPTGVGKTELAKALAAYLFDTEDAMIRIDMSEYMEKHAVSRLIGAPPGYVGYDEGGQLTEAVRRRPYSVILFDEIEKAHPDVFNVMLQILDDGRVTDSRGRTVDFKNTILILTSNIGSQYILDVAGDDSRYEEMRSRVTEALRANFRPEFLNRVDETIIFHSLRKDQLQQIVRIQLHRLEERLSDRKLSLSMSPEAIDFLVEIGFDPVYGARPLKRVIQRELETAIAKAILRGQFSDGDTIQVAVENERLVFKAIATPTAVPLS</sequence>
<evidence type="ECO:0000250" key="1"/>
<evidence type="ECO:0000255" key="2">
    <source>
        <dbReference type="PROSITE-ProRule" id="PRU01251"/>
    </source>
</evidence>
<evidence type="ECO:0000269" key="3">
    <source>
    </source>
</evidence>
<evidence type="ECO:0000305" key="4"/>
<gene>
    <name type="primary">clpB1</name>
    <name type="ordered locus">Synpcc7942_1089</name>
</gene>
<name>CLPB1_SYNE7</name>